<evidence type="ECO:0000255" key="1">
    <source>
        <dbReference type="HAMAP-Rule" id="MF_00384"/>
    </source>
</evidence>
<protein>
    <recommendedName>
        <fullName evidence="1">Homoserine kinase</fullName>
        <shortName evidence="1">HK</shortName>
        <shortName evidence="1">HSK</shortName>
        <ecNumber evidence="1">2.7.1.39</ecNumber>
    </recommendedName>
</protein>
<proteinExistence type="inferred from homology"/>
<reference key="1">
    <citation type="journal article" date="2002" name="Proc. Natl. Acad. Sci. U.S.A.">
        <title>Complete genome sequence and comparative genomic analysis of an emerging human pathogen, serotype V Streptococcus agalactiae.</title>
        <authorList>
            <person name="Tettelin H."/>
            <person name="Masignani V."/>
            <person name="Cieslewicz M.J."/>
            <person name="Eisen J.A."/>
            <person name="Peterson S.N."/>
            <person name="Wessels M.R."/>
            <person name="Paulsen I.T."/>
            <person name="Nelson K.E."/>
            <person name="Margarit I."/>
            <person name="Read T.D."/>
            <person name="Madoff L.C."/>
            <person name="Wolf A.M."/>
            <person name="Beanan M.J."/>
            <person name="Brinkac L.M."/>
            <person name="Daugherty S.C."/>
            <person name="DeBoy R.T."/>
            <person name="Durkin A.S."/>
            <person name="Kolonay J.F."/>
            <person name="Madupu R."/>
            <person name="Lewis M.R."/>
            <person name="Radune D."/>
            <person name="Fedorova N.B."/>
            <person name="Scanlan D."/>
            <person name="Khouri H.M."/>
            <person name="Mulligan S."/>
            <person name="Carty H.A."/>
            <person name="Cline R.T."/>
            <person name="Van Aken S.E."/>
            <person name="Gill J."/>
            <person name="Scarselli M."/>
            <person name="Mora M."/>
            <person name="Iacobini E.T."/>
            <person name="Brettoni C."/>
            <person name="Galli G."/>
            <person name="Mariani M."/>
            <person name="Vegni F."/>
            <person name="Maione D."/>
            <person name="Rinaudo D."/>
            <person name="Rappuoli R."/>
            <person name="Telford J.L."/>
            <person name="Kasper D.L."/>
            <person name="Grandi G."/>
            <person name="Fraser C.M."/>
        </authorList>
    </citation>
    <scope>NUCLEOTIDE SEQUENCE [LARGE SCALE GENOMIC DNA]</scope>
    <source>
        <strain>ATCC BAA-611 / 2603 V/R</strain>
    </source>
</reference>
<keyword id="KW-0028">Amino-acid biosynthesis</keyword>
<keyword id="KW-0067">ATP-binding</keyword>
<keyword id="KW-0963">Cytoplasm</keyword>
<keyword id="KW-0418">Kinase</keyword>
<keyword id="KW-0547">Nucleotide-binding</keyword>
<keyword id="KW-1185">Reference proteome</keyword>
<keyword id="KW-0791">Threonine biosynthesis</keyword>
<keyword id="KW-0808">Transferase</keyword>
<gene>
    <name evidence="1" type="primary">thrB</name>
    <name type="ordered locus">SAG1119</name>
</gene>
<sequence>MRIIVPATSANIGPGFDSIGVALSKYLIIEVLEESTEWLVEHNLVNIPKDHTNLLIQTALHVKSDLAPHRLKMFSDIPLARGLGSSSSVIVAGIELANQLGNLALSQKEKLEIATRLEGHPDNVAPAIFGDLVISSIVKNDIKSLEVMFPDSSFIAFIPNYELKTSDSRNVLPQKLSYEDAVASSSVANVMVASLLKGDLVTAGWAIERDLFHERYRQPLVKEFEVIKQISTQNGAYATYLSGAGPTVMVLCSKEKEQAIVTELSKLCLGGQIQVLNIERKGVRVEKR</sequence>
<organism>
    <name type="scientific">Streptococcus agalactiae serotype V (strain ATCC BAA-611 / 2603 V/R)</name>
    <dbReference type="NCBI Taxonomy" id="208435"/>
    <lineage>
        <taxon>Bacteria</taxon>
        <taxon>Bacillati</taxon>
        <taxon>Bacillota</taxon>
        <taxon>Bacilli</taxon>
        <taxon>Lactobacillales</taxon>
        <taxon>Streptococcaceae</taxon>
        <taxon>Streptococcus</taxon>
    </lineage>
</organism>
<accession>Q8DZI2</accession>
<feature type="chain" id="PRO_0000156615" description="Homoserine kinase">
    <location>
        <begin position="1"/>
        <end position="288"/>
    </location>
</feature>
<feature type="binding site" evidence="1">
    <location>
        <begin position="78"/>
        <end position="88"/>
    </location>
    <ligand>
        <name>ATP</name>
        <dbReference type="ChEBI" id="CHEBI:30616"/>
    </ligand>
</feature>
<comment type="function">
    <text evidence="1">Catalyzes the ATP-dependent phosphorylation of L-homoserine to L-homoserine phosphate.</text>
</comment>
<comment type="catalytic activity">
    <reaction evidence="1">
        <text>L-homoserine + ATP = O-phospho-L-homoserine + ADP + H(+)</text>
        <dbReference type="Rhea" id="RHEA:13985"/>
        <dbReference type="ChEBI" id="CHEBI:15378"/>
        <dbReference type="ChEBI" id="CHEBI:30616"/>
        <dbReference type="ChEBI" id="CHEBI:57476"/>
        <dbReference type="ChEBI" id="CHEBI:57590"/>
        <dbReference type="ChEBI" id="CHEBI:456216"/>
        <dbReference type="EC" id="2.7.1.39"/>
    </reaction>
</comment>
<comment type="pathway">
    <text evidence="1">Amino-acid biosynthesis; L-threonine biosynthesis; L-threonine from L-aspartate: step 4/5.</text>
</comment>
<comment type="subcellular location">
    <subcellularLocation>
        <location evidence="1">Cytoplasm</location>
    </subcellularLocation>
</comment>
<comment type="similarity">
    <text evidence="1">Belongs to the GHMP kinase family. Homoserine kinase subfamily.</text>
</comment>
<dbReference type="EC" id="2.7.1.39" evidence="1"/>
<dbReference type="EMBL" id="AE009948">
    <property type="protein sequence ID" value="AAN00001.1"/>
    <property type="molecule type" value="Genomic_DNA"/>
</dbReference>
<dbReference type="RefSeq" id="NP_688128.1">
    <property type="nucleotide sequence ID" value="NC_004116.1"/>
</dbReference>
<dbReference type="RefSeq" id="WP_001220326.1">
    <property type="nucleotide sequence ID" value="NC_004116.1"/>
</dbReference>
<dbReference type="SMR" id="Q8DZI2"/>
<dbReference type="STRING" id="208435.SAG1119"/>
<dbReference type="KEGG" id="sag:SAG1119"/>
<dbReference type="PATRIC" id="fig|208435.3.peg.1127"/>
<dbReference type="HOGENOM" id="CLU_041243_0_0_9"/>
<dbReference type="OrthoDB" id="9769912at2"/>
<dbReference type="UniPathway" id="UPA00050">
    <property type="reaction ID" value="UER00064"/>
</dbReference>
<dbReference type="Proteomes" id="UP000000821">
    <property type="component" value="Chromosome"/>
</dbReference>
<dbReference type="GO" id="GO:0005737">
    <property type="term" value="C:cytoplasm"/>
    <property type="evidence" value="ECO:0007669"/>
    <property type="project" value="UniProtKB-SubCell"/>
</dbReference>
<dbReference type="GO" id="GO:0005524">
    <property type="term" value="F:ATP binding"/>
    <property type="evidence" value="ECO:0007669"/>
    <property type="project" value="UniProtKB-UniRule"/>
</dbReference>
<dbReference type="GO" id="GO:0004413">
    <property type="term" value="F:homoserine kinase activity"/>
    <property type="evidence" value="ECO:0007669"/>
    <property type="project" value="UniProtKB-UniRule"/>
</dbReference>
<dbReference type="GO" id="GO:0009088">
    <property type="term" value="P:threonine biosynthetic process"/>
    <property type="evidence" value="ECO:0007669"/>
    <property type="project" value="UniProtKB-UniRule"/>
</dbReference>
<dbReference type="Gene3D" id="3.30.230.10">
    <property type="match status" value="1"/>
</dbReference>
<dbReference type="Gene3D" id="3.30.70.890">
    <property type="entry name" value="GHMP kinase, C-terminal domain"/>
    <property type="match status" value="1"/>
</dbReference>
<dbReference type="HAMAP" id="MF_00384">
    <property type="entry name" value="Homoser_kinase"/>
    <property type="match status" value="1"/>
</dbReference>
<dbReference type="InterPro" id="IPR013750">
    <property type="entry name" value="GHMP_kinase_C_dom"/>
</dbReference>
<dbReference type="InterPro" id="IPR036554">
    <property type="entry name" value="GHMP_kinase_C_sf"/>
</dbReference>
<dbReference type="InterPro" id="IPR006204">
    <property type="entry name" value="GHMP_kinase_N_dom"/>
</dbReference>
<dbReference type="InterPro" id="IPR006203">
    <property type="entry name" value="GHMP_knse_ATP-bd_CS"/>
</dbReference>
<dbReference type="InterPro" id="IPR000870">
    <property type="entry name" value="Homoserine_kinase"/>
</dbReference>
<dbReference type="InterPro" id="IPR020568">
    <property type="entry name" value="Ribosomal_Su5_D2-typ_SF"/>
</dbReference>
<dbReference type="InterPro" id="IPR014721">
    <property type="entry name" value="Ribsml_uS5_D2-typ_fold_subgr"/>
</dbReference>
<dbReference type="NCBIfam" id="TIGR00191">
    <property type="entry name" value="thrB"/>
    <property type="match status" value="1"/>
</dbReference>
<dbReference type="PANTHER" id="PTHR20861:SF1">
    <property type="entry name" value="HOMOSERINE KINASE"/>
    <property type="match status" value="1"/>
</dbReference>
<dbReference type="PANTHER" id="PTHR20861">
    <property type="entry name" value="HOMOSERINE/4-DIPHOSPHOCYTIDYL-2-C-METHYL-D-ERYTHRITOL KINASE"/>
    <property type="match status" value="1"/>
</dbReference>
<dbReference type="Pfam" id="PF08544">
    <property type="entry name" value="GHMP_kinases_C"/>
    <property type="match status" value="1"/>
</dbReference>
<dbReference type="Pfam" id="PF00288">
    <property type="entry name" value="GHMP_kinases_N"/>
    <property type="match status" value="1"/>
</dbReference>
<dbReference type="PIRSF" id="PIRSF000676">
    <property type="entry name" value="Homoser_kin"/>
    <property type="match status" value="1"/>
</dbReference>
<dbReference type="PRINTS" id="PR00958">
    <property type="entry name" value="HOMSERKINASE"/>
</dbReference>
<dbReference type="SUPFAM" id="SSF55060">
    <property type="entry name" value="GHMP Kinase, C-terminal domain"/>
    <property type="match status" value="1"/>
</dbReference>
<dbReference type="SUPFAM" id="SSF54211">
    <property type="entry name" value="Ribosomal protein S5 domain 2-like"/>
    <property type="match status" value="1"/>
</dbReference>
<dbReference type="PROSITE" id="PS00627">
    <property type="entry name" value="GHMP_KINASES_ATP"/>
    <property type="match status" value="1"/>
</dbReference>
<name>KHSE_STRA5</name>